<reference key="1">
    <citation type="journal article" date="1997" name="Nature">
        <title>The nucleotide sequence of Saccharomyces cerevisiae chromosome IX.</title>
        <authorList>
            <person name="Churcher C.M."/>
            <person name="Bowman S."/>
            <person name="Badcock K."/>
            <person name="Bankier A.T."/>
            <person name="Brown D."/>
            <person name="Chillingworth T."/>
            <person name="Connor R."/>
            <person name="Devlin K."/>
            <person name="Gentles S."/>
            <person name="Hamlin N."/>
            <person name="Harris D.E."/>
            <person name="Horsnell T."/>
            <person name="Hunt S."/>
            <person name="Jagels K."/>
            <person name="Jones M."/>
            <person name="Lye G."/>
            <person name="Moule S."/>
            <person name="Odell C."/>
            <person name="Pearson D."/>
            <person name="Rajandream M.A."/>
            <person name="Rice P."/>
            <person name="Rowley N."/>
            <person name="Skelton J."/>
            <person name="Smith V."/>
            <person name="Walsh S.V."/>
            <person name="Whitehead S."/>
            <person name="Barrell B.G."/>
        </authorList>
    </citation>
    <scope>NUCLEOTIDE SEQUENCE [LARGE SCALE GENOMIC DNA]</scope>
    <source>
        <strain>ATCC 204508 / S288c</strain>
    </source>
</reference>
<reference key="2">
    <citation type="journal article" date="2014" name="G3 (Bethesda)">
        <title>The reference genome sequence of Saccharomyces cerevisiae: Then and now.</title>
        <authorList>
            <person name="Engel S.R."/>
            <person name="Dietrich F.S."/>
            <person name="Fisk D.G."/>
            <person name="Binkley G."/>
            <person name="Balakrishnan R."/>
            <person name="Costanzo M.C."/>
            <person name="Dwight S.S."/>
            <person name="Hitz B.C."/>
            <person name="Karra K."/>
            <person name="Nash R.S."/>
            <person name="Weng S."/>
            <person name="Wong E.D."/>
            <person name="Lloyd P."/>
            <person name="Skrzypek M.S."/>
            <person name="Miyasato S.R."/>
            <person name="Simison M."/>
            <person name="Cherry J.M."/>
        </authorList>
    </citation>
    <scope>GENOME REANNOTATION</scope>
    <source>
        <strain>ATCC 204508 / S288c</strain>
    </source>
</reference>
<reference key="3">
    <citation type="journal article" date="2007" name="Genome Res.">
        <title>Approaching a complete repository of sequence-verified protein-encoding clones for Saccharomyces cerevisiae.</title>
        <authorList>
            <person name="Hu Y."/>
            <person name="Rolfs A."/>
            <person name="Bhullar B."/>
            <person name="Murthy T.V.S."/>
            <person name="Zhu C."/>
            <person name="Berger M.F."/>
            <person name="Camargo A.A."/>
            <person name="Kelley F."/>
            <person name="McCarron S."/>
            <person name="Jepson D."/>
            <person name="Richardson A."/>
            <person name="Raphael J."/>
            <person name="Moreira D."/>
            <person name="Taycher E."/>
            <person name="Zuo D."/>
            <person name="Mohr S."/>
            <person name="Kane M.F."/>
            <person name="Williamson J."/>
            <person name="Simpson A.J.G."/>
            <person name="Bulyk M.L."/>
            <person name="Harlow E."/>
            <person name="Marsischky G."/>
            <person name="Kolodner R.D."/>
            <person name="LaBaer J."/>
        </authorList>
    </citation>
    <scope>NUCLEOTIDE SEQUENCE [GENOMIC DNA]</scope>
    <source>
        <strain>ATCC 204508 / S288c</strain>
    </source>
</reference>
<reference key="4">
    <citation type="journal article" date="2003" name="Nature">
        <title>Global analysis of protein localization in budding yeast.</title>
        <authorList>
            <person name="Huh W.-K."/>
            <person name="Falvo J.V."/>
            <person name="Gerke L.C."/>
            <person name="Carroll A.S."/>
            <person name="Howson R.W."/>
            <person name="Weissman J.S."/>
            <person name="O'Shea E.K."/>
        </authorList>
    </citation>
    <scope>SUBCELLULAR LOCATION [LARGE SCALE ANALYSIS]</scope>
</reference>
<reference key="5">
    <citation type="journal article" date="2009" name="PLoS Genet.">
        <title>Computationally driven, quantitative experiments discover genes required for mitochondrial biogenesis.</title>
        <authorList>
            <person name="Hess D.C."/>
            <person name="Myers C.L."/>
            <person name="Huttenhower C."/>
            <person name="Hibbs M.A."/>
            <person name="Hayes A.P."/>
            <person name="Paw J."/>
            <person name="Clore J.J."/>
            <person name="Mendoza R.M."/>
            <person name="Luis B.S."/>
            <person name="Nislow C."/>
            <person name="Giaever G."/>
            <person name="Costanzo M."/>
            <person name="Troyanskaya O.G."/>
            <person name="Caudy A.A."/>
        </authorList>
    </citation>
    <scope>DISRUPTION PHENOTYPE</scope>
</reference>
<reference key="6">
    <citation type="journal article" date="2003" name="Proc. Natl. Acad. Sci. U.S.A.">
        <title>The proteome of Saccharomyces cerevisiae mitochondria.</title>
        <authorList>
            <person name="Sickmann A."/>
            <person name="Reinders J."/>
            <person name="Wagner Y."/>
            <person name="Joppich C."/>
            <person name="Zahedi R.P."/>
            <person name="Meyer H.E."/>
            <person name="Schoenfisch B."/>
            <person name="Perschil I."/>
            <person name="Chacinska A."/>
            <person name="Guiard B."/>
            <person name="Rehling P."/>
            <person name="Pfanner N."/>
            <person name="Meisinger C."/>
        </authorList>
    </citation>
    <scope>SUBCELLULAR LOCATION [LARGE SCALE ANALYSIS]</scope>
    <source>
        <strain>ATCC 76625 / YPH499</strain>
    </source>
</reference>
<reference key="7">
    <citation type="journal article" date="2012" name="Proc. Natl. Acad. Sci. U.S.A.">
        <title>N-terminal acetylome analyses and functional insights of the N-terminal acetyltransferase NatB.</title>
        <authorList>
            <person name="Van Damme P."/>
            <person name="Lasa M."/>
            <person name="Polevoda B."/>
            <person name="Gazquez C."/>
            <person name="Elosegui-Artola A."/>
            <person name="Kim D.S."/>
            <person name="De Juan-Pardo E."/>
            <person name="Demeyer K."/>
            <person name="Hole K."/>
            <person name="Larrea E."/>
            <person name="Timmerman E."/>
            <person name="Prieto J."/>
            <person name="Arnesen T."/>
            <person name="Sherman F."/>
            <person name="Gevaert K."/>
            <person name="Aldabe R."/>
        </authorList>
    </citation>
    <scope>ACETYLATION [LARGE SCALE ANALYSIS] AT SER-2</scope>
    <scope>CLEAVAGE OF INITIATOR METHIONINE [LARGE SCALE ANALYSIS]</scope>
    <scope>IDENTIFICATION BY MASS SPECTROMETRY [LARGE SCALE ANALYSIS]</scope>
</reference>
<organism>
    <name type="scientific">Saccharomyces cerevisiae (strain ATCC 204508 / S288c)</name>
    <name type="common">Baker's yeast</name>
    <dbReference type="NCBI Taxonomy" id="559292"/>
    <lineage>
        <taxon>Eukaryota</taxon>
        <taxon>Fungi</taxon>
        <taxon>Dikarya</taxon>
        <taxon>Ascomycota</taxon>
        <taxon>Saccharomycotina</taxon>
        <taxon>Saccharomycetes</taxon>
        <taxon>Saccharomycetales</taxon>
        <taxon>Saccharomycetaceae</taxon>
        <taxon>Saccharomyces</taxon>
    </lineage>
</organism>
<accession>P40502</accession>
<accession>D6VVK0</accession>
<evidence type="ECO:0000255" key="1"/>
<evidence type="ECO:0000269" key="2">
    <source>
    </source>
</evidence>
<evidence type="ECO:0000269" key="3">
    <source>
    </source>
</evidence>
<evidence type="ECO:0000269" key="4">
    <source>
    </source>
</evidence>
<evidence type="ECO:0000305" key="5"/>
<evidence type="ECO:0007744" key="6">
    <source>
    </source>
</evidence>
<gene>
    <name type="primary">AIM19</name>
    <name type="ordered locus">YIL087C</name>
</gene>
<keyword id="KW-0007">Acetylation</keyword>
<keyword id="KW-0472">Membrane</keyword>
<keyword id="KW-0496">Mitochondrion</keyword>
<keyword id="KW-1185">Reference proteome</keyword>
<keyword id="KW-0812">Transmembrane</keyword>
<keyword id="KW-1133">Transmembrane helix</keyword>
<name>AIM19_YEAST</name>
<dbReference type="EMBL" id="Z46728">
    <property type="protein sequence ID" value="CAA86707.1"/>
    <property type="molecule type" value="Genomic_DNA"/>
</dbReference>
<dbReference type="EMBL" id="AY558539">
    <property type="protein sequence ID" value="AAS56865.1"/>
    <property type="molecule type" value="Genomic_DNA"/>
</dbReference>
<dbReference type="EMBL" id="BK006942">
    <property type="protein sequence ID" value="DAA08466.1"/>
    <property type="molecule type" value="Genomic_DNA"/>
</dbReference>
<dbReference type="PIR" id="S49793">
    <property type="entry name" value="S49793"/>
</dbReference>
<dbReference type="RefSeq" id="NP_012179.3">
    <property type="nucleotide sequence ID" value="NM_001179435.3"/>
</dbReference>
<dbReference type="BioGRID" id="34906">
    <property type="interactions" value="53"/>
</dbReference>
<dbReference type="FunCoup" id="P40502">
    <property type="interactions" value="72"/>
</dbReference>
<dbReference type="STRING" id="4932.YIL087C"/>
<dbReference type="iPTMnet" id="P40502"/>
<dbReference type="PaxDb" id="4932-YIL087C"/>
<dbReference type="PeptideAtlas" id="P40502"/>
<dbReference type="EnsemblFungi" id="YIL087C_mRNA">
    <property type="protein sequence ID" value="YIL087C"/>
    <property type="gene ID" value="YIL087C"/>
</dbReference>
<dbReference type="GeneID" id="854722"/>
<dbReference type="KEGG" id="sce:YIL087C"/>
<dbReference type="AGR" id="SGD:S000001349"/>
<dbReference type="SGD" id="S000001349">
    <property type="gene designation" value="AIM19"/>
</dbReference>
<dbReference type="VEuPathDB" id="FungiDB:YIL087C"/>
<dbReference type="eggNOG" id="ENOG502S412">
    <property type="taxonomic scope" value="Eukaryota"/>
</dbReference>
<dbReference type="HOGENOM" id="CLU_130042_0_0_1"/>
<dbReference type="InParanoid" id="P40502"/>
<dbReference type="OMA" id="RYGRVWP"/>
<dbReference type="OrthoDB" id="5554402at2759"/>
<dbReference type="BioCyc" id="YEAST:G3O-31347-MONOMER"/>
<dbReference type="BioGRID-ORCS" id="854722">
    <property type="hits" value="0 hits in 10 CRISPR screens"/>
</dbReference>
<dbReference type="PRO" id="PR:P40502"/>
<dbReference type="Proteomes" id="UP000002311">
    <property type="component" value="Chromosome IX"/>
</dbReference>
<dbReference type="RNAct" id="P40502">
    <property type="molecule type" value="protein"/>
</dbReference>
<dbReference type="GO" id="GO:0031966">
    <property type="term" value="C:mitochondrial membrane"/>
    <property type="evidence" value="ECO:0007669"/>
    <property type="project" value="UniProtKB-SubCell"/>
</dbReference>
<dbReference type="GO" id="GO:0005739">
    <property type="term" value="C:mitochondrion"/>
    <property type="evidence" value="ECO:0000353"/>
    <property type="project" value="SGD"/>
</dbReference>
<dbReference type="InterPro" id="IPR019419">
    <property type="entry name" value="AIM19"/>
</dbReference>
<dbReference type="PANTHER" id="PTHR28177">
    <property type="entry name" value="ALTERED INHERITANCE OF MITOCHONDRIA PROTEIN 19, MITOCHONDRIAL"/>
    <property type="match status" value="1"/>
</dbReference>
<dbReference type="PANTHER" id="PTHR28177:SF1">
    <property type="entry name" value="ALTERED INHERITANCE OF MITOCHONDRIA PROTEIN 19, MITOCHONDRIAL"/>
    <property type="match status" value="1"/>
</dbReference>
<dbReference type="Pfam" id="PF10315">
    <property type="entry name" value="Aim19"/>
    <property type="match status" value="1"/>
</dbReference>
<comment type="subcellular location">
    <subcellularLocation>
        <location evidence="2 3">Mitochondrion membrane</location>
        <topology evidence="2 3">Multi-pass membrane protein</topology>
    </subcellularLocation>
</comment>
<comment type="disruption phenotype">
    <text evidence="4">Increases frequency of mitochondrial genome loss.</text>
</comment>
<comment type="similarity">
    <text evidence="5">Belongs to the AIM19 family.</text>
</comment>
<feature type="initiator methionine" description="Removed" evidence="6">
    <location>
        <position position="1"/>
    </location>
</feature>
<feature type="chain" id="PRO_0000202977" description="Altered inheritance of mitochondria protein 19, mitochondrial">
    <location>
        <begin position="2"/>
        <end position="157"/>
    </location>
</feature>
<feature type="transmembrane region" description="Helical" evidence="1">
    <location>
        <begin position="31"/>
        <end position="48"/>
    </location>
</feature>
<feature type="transmembrane region" description="Helical" evidence="1">
    <location>
        <begin position="80"/>
        <end position="96"/>
    </location>
</feature>
<feature type="transmembrane region" description="Helical" evidence="1">
    <location>
        <begin position="103"/>
        <end position="119"/>
    </location>
</feature>
<feature type="transmembrane region" description="Helical" evidence="1">
    <location>
        <begin position="131"/>
        <end position="147"/>
    </location>
</feature>
<feature type="modified residue" description="N-acetylserine" evidence="6">
    <location>
        <position position="2"/>
    </location>
</feature>
<proteinExistence type="evidence at protein level"/>
<sequence length="157" mass="16924">MSAKPATDDAKDELLSPFRRLYALTRTPYPALANAALLASTPVLSPSFKVPPTQSPALSIPMSRVFSKSSTARIGITTKTALFFSTMQAIGAYMIYDNDLENGAGFIATWSALYLIVGGKKSFSALRYGRTWPLVLSSVSLANAVLYGQRFLATGFQ</sequence>
<protein>
    <recommendedName>
        <fullName>Altered inheritance of mitochondria protein 19, mitochondrial</fullName>
    </recommendedName>
</protein>